<comment type="function">
    <text evidence="1">Cytochrome b subunit of the cytochrome bc1 complex, an essential component of the respiratory electron transport chain required for ATP synthesis. The bc1 complex catalyzes the oxidation of ubiquinol and the reduction of cytochrome c in the respiratory chain. The bc1 complex operates through a Q-cycle mechanism that couples electron transfer to generation of the proton gradient that drives ATP synthesis.</text>
</comment>
<comment type="catalytic activity">
    <reaction evidence="1">
        <text>a quinol + 2 Fe(III)-[cytochrome c](out) = a quinone + 2 Fe(II)-[cytochrome c](out) + 2 H(+)(out)</text>
        <dbReference type="Rhea" id="RHEA:11484"/>
        <dbReference type="Rhea" id="RHEA-COMP:10350"/>
        <dbReference type="Rhea" id="RHEA-COMP:14399"/>
        <dbReference type="ChEBI" id="CHEBI:15378"/>
        <dbReference type="ChEBI" id="CHEBI:24646"/>
        <dbReference type="ChEBI" id="CHEBI:29033"/>
        <dbReference type="ChEBI" id="CHEBI:29034"/>
        <dbReference type="ChEBI" id="CHEBI:132124"/>
        <dbReference type="EC" id="7.1.1.8"/>
    </reaction>
</comment>
<comment type="subunit">
    <text evidence="1">The cytochrome bc1 complex is composed of a cytochrome b (QcrB), the Rieske iron-sulfur protein (QcrA) and a diheme cytochrome c (QcrC) subunit.</text>
</comment>
<comment type="subcellular location">
    <subcellularLocation>
        <location evidence="3">Cell membrane</location>
        <topology evidence="3">Multi-pass membrane protein</topology>
    </subcellularLocation>
</comment>
<comment type="PTM">
    <text evidence="2">Binds 2 heme c groups covalently per subunit.</text>
</comment>
<proteinExistence type="inferred from homology"/>
<sequence>MKKLGFTRSSRRCSQPQEREQESERSRRRLRRRLSEGLLLLVALTVSGGLAAVLTPTPQVAVADEDSSALLRTGKQLFDTSCVSCHGANLQGVPDHGPSLIGVGEAAVYFQVSTGRMPAMRGEAQVARKDPIFNESQIDAIGAYIQANGGGPTVARNPDGSVAMQSLRGTDLGRGGDLFRLNCASCHNFTGKGGALSSGKYAPDLGPANEQQILTAMLTGPQNMPKFADRQLSFEAKKDIIGYVRTVIEERQPGGYSLGGFGPAPEGMAIWIIGMVTAIGLALWIGARA</sequence>
<protein>
    <recommendedName>
        <fullName>Cytochrome bc1 complex cytochrome c subunit</fullName>
        <ecNumber evidence="1">7.1.1.8</ecNumber>
    </recommendedName>
    <alternativeName>
        <fullName>Cytochrome bc1 reductase complex subunit QcrC</fullName>
    </alternativeName>
    <alternativeName>
        <fullName>Ubiquinol--cytochrome c reductase cytochrome c subunit</fullName>
    </alternativeName>
</protein>
<organism>
    <name type="scientific">Mycobacterium leprae (strain TN)</name>
    <dbReference type="NCBI Taxonomy" id="272631"/>
    <lineage>
        <taxon>Bacteria</taxon>
        <taxon>Bacillati</taxon>
        <taxon>Actinomycetota</taxon>
        <taxon>Actinomycetes</taxon>
        <taxon>Mycobacteriales</taxon>
        <taxon>Mycobacteriaceae</taxon>
        <taxon>Mycobacterium</taxon>
    </lineage>
</organism>
<accession>O69583</accession>
<name>QCRC_MYCLE</name>
<evidence type="ECO:0000250" key="1">
    <source>
        <dbReference type="UniProtKB" id="P9WP35"/>
    </source>
</evidence>
<evidence type="ECO:0000250" key="2">
    <source>
        <dbReference type="UniProtKB" id="Q8NNK5"/>
    </source>
</evidence>
<evidence type="ECO:0000255" key="3"/>
<evidence type="ECO:0000255" key="4">
    <source>
        <dbReference type="PROSITE-ProRule" id="PRU00433"/>
    </source>
</evidence>
<evidence type="ECO:0000256" key="5">
    <source>
        <dbReference type="SAM" id="MobiDB-lite"/>
    </source>
</evidence>
<feature type="chain" id="PRO_0000108449" description="Cytochrome bc1 complex cytochrome c subunit">
    <location>
        <begin position="1"/>
        <end position="289"/>
    </location>
</feature>
<feature type="transmembrane region" description="Helical" evidence="3">
    <location>
        <begin position="37"/>
        <end position="55"/>
    </location>
</feature>
<feature type="transmembrane region" description="Helical" evidence="3">
    <location>
        <begin position="267"/>
        <end position="287"/>
    </location>
</feature>
<feature type="domain" description="Cytochrome c 1" evidence="4">
    <location>
        <begin position="69"/>
        <end position="149"/>
    </location>
</feature>
<feature type="domain" description="Cytochrome c 2" evidence="4">
    <location>
        <begin position="170"/>
        <end position="248"/>
    </location>
</feature>
<feature type="region of interest" description="Disordered" evidence="5">
    <location>
        <begin position="1"/>
        <end position="28"/>
    </location>
</feature>
<feature type="compositionally biased region" description="Basic residues" evidence="5">
    <location>
        <begin position="1"/>
        <end position="11"/>
    </location>
</feature>
<feature type="binding site" description="covalent" evidence="4">
    <location>
        <position position="82"/>
    </location>
    <ligand>
        <name>heme c</name>
        <dbReference type="ChEBI" id="CHEBI:61717"/>
        <label>1</label>
    </ligand>
</feature>
<feature type="binding site" description="covalent" evidence="4">
    <location>
        <position position="85"/>
    </location>
    <ligand>
        <name>heme c</name>
        <dbReference type="ChEBI" id="CHEBI:61717"/>
        <label>1</label>
    </ligand>
</feature>
<feature type="binding site" description="axial binding residue" evidence="4">
    <location>
        <position position="86"/>
    </location>
    <ligand>
        <name>heme c</name>
        <dbReference type="ChEBI" id="CHEBI:61717"/>
        <label>1</label>
    </ligand>
    <ligandPart>
        <name>Fe</name>
        <dbReference type="ChEBI" id="CHEBI:18248"/>
    </ligandPart>
</feature>
<feature type="binding site" description="covalent" evidence="4">
    <location>
        <position position="183"/>
    </location>
    <ligand>
        <name>heme c</name>
        <dbReference type="ChEBI" id="CHEBI:61717"/>
        <label>2</label>
    </ligand>
</feature>
<feature type="binding site" description="covalent" evidence="4">
    <location>
        <position position="186"/>
    </location>
    <ligand>
        <name>heme c</name>
        <dbReference type="ChEBI" id="CHEBI:61717"/>
        <label>2</label>
    </ligand>
</feature>
<feature type="binding site" description="axial binding residue" evidence="4">
    <location>
        <position position="187"/>
    </location>
    <ligand>
        <name>heme c</name>
        <dbReference type="ChEBI" id="CHEBI:61717"/>
        <label>2</label>
    </ligand>
    <ligandPart>
        <name>Fe</name>
        <dbReference type="ChEBI" id="CHEBI:18248"/>
    </ligandPart>
</feature>
<gene>
    <name type="primary">qcrC</name>
    <name type="ordered locus">ML0881</name>
    <name type="ORF">MLCB268.36</name>
</gene>
<reference key="1">
    <citation type="journal article" date="2001" name="Nature">
        <title>Massive gene decay in the leprosy bacillus.</title>
        <authorList>
            <person name="Cole S.T."/>
            <person name="Eiglmeier K."/>
            <person name="Parkhill J."/>
            <person name="James K.D."/>
            <person name="Thomson N.R."/>
            <person name="Wheeler P.R."/>
            <person name="Honore N."/>
            <person name="Garnier T."/>
            <person name="Churcher C.M."/>
            <person name="Harris D.E."/>
            <person name="Mungall K.L."/>
            <person name="Basham D."/>
            <person name="Brown D."/>
            <person name="Chillingworth T."/>
            <person name="Connor R."/>
            <person name="Davies R.M."/>
            <person name="Devlin K."/>
            <person name="Duthoy S."/>
            <person name="Feltwell T."/>
            <person name="Fraser A."/>
            <person name="Hamlin N."/>
            <person name="Holroyd S."/>
            <person name="Hornsby T."/>
            <person name="Jagels K."/>
            <person name="Lacroix C."/>
            <person name="Maclean J."/>
            <person name="Moule S."/>
            <person name="Murphy L.D."/>
            <person name="Oliver K."/>
            <person name="Quail M.A."/>
            <person name="Rajandream M.A."/>
            <person name="Rutherford K.M."/>
            <person name="Rutter S."/>
            <person name="Seeger K."/>
            <person name="Simon S."/>
            <person name="Simmonds M."/>
            <person name="Skelton J."/>
            <person name="Squares R."/>
            <person name="Squares S."/>
            <person name="Stevens K."/>
            <person name="Taylor K."/>
            <person name="Whitehead S."/>
            <person name="Woodward J.R."/>
            <person name="Barrell B.G."/>
        </authorList>
    </citation>
    <scope>NUCLEOTIDE SEQUENCE [LARGE SCALE GENOMIC DNA]</scope>
    <source>
        <strain>TN</strain>
    </source>
</reference>
<dbReference type="EC" id="7.1.1.8" evidence="1"/>
<dbReference type="EMBL" id="AL583920">
    <property type="protein sequence ID" value="CAC31262.1"/>
    <property type="molecule type" value="Genomic_DNA"/>
</dbReference>
<dbReference type="EMBL" id="AL022602">
    <property type="protein sequence ID" value="CAA18702.1"/>
    <property type="molecule type" value="Genomic_DNA"/>
</dbReference>
<dbReference type="PIR" id="C87019">
    <property type="entry name" value="C87019"/>
</dbReference>
<dbReference type="RefSeq" id="NP_301667.1">
    <property type="nucleotide sequence ID" value="NC_002677.1"/>
</dbReference>
<dbReference type="RefSeq" id="WP_010907991.1">
    <property type="nucleotide sequence ID" value="NC_002677.1"/>
</dbReference>
<dbReference type="SMR" id="O69583"/>
<dbReference type="STRING" id="272631.gene:17574707"/>
<dbReference type="KEGG" id="mle:ML0881"/>
<dbReference type="PATRIC" id="fig|272631.5.peg.1612"/>
<dbReference type="Leproma" id="ML0881"/>
<dbReference type="eggNOG" id="COG2010">
    <property type="taxonomic scope" value="Bacteria"/>
</dbReference>
<dbReference type="HOGENOM" id="CLU_086567_0_0_11"/>
<dbReference type="OrthoDB" id="9811281at2"/>
<dbReference type="Proteomes" id="UP000000806">
    <property type="component" value="Chromosome"/>
</dbReference>
<dbReference type="GO" id="GO:0005886">
    <property type="term" value="C:plasma membrane"/>
    <property type="evidence" value="ECO:0007669"/>
    <property type="project" value="UniProtKB-SubCell"/>
</dbReference>
<dbReference type="GO" id="GO:0020037">
    <property type="term" value="F:heme binding"/>
    <property type="evidence" value="ECO:0007669"/>
    <property type="project" value="InterPro"/>
</dbReference>
<dbReference type="GO" id="GO:0005506">
    <property type="term" value="F:iron ion binding"/>
    <property type="evidence" value="ECO:0007669"/>
    <property type="project" value="InterPro"/>
</dbReference>
<dbReference type="GO" id="GO:0008121">
    <property type="term" value="F:ubiquinol-cytochrome-c reductase activity"/>
    <property type="evidence" value="ECO:0007669"/>
    <property type="project" value="UniProtKB-EC"/>
</dbReference>
<dbReference type="Gene3D" id="1.10.760.10">
    <property type="entry name" value="Cytochrome c-like domain"/>
    <property type="match status" value="2"/>
</dbReference>
<dbReference type="InterPro" id="IPR009152">
    <property type="entry name" value="bc1_cytC-su"/>
</dbReference>
<dbReference type="InterPro" id="IPR009056">
    <property type="entry name" value="Cyt_c-like_dom"/>
</dbReference>
<dbReference type="InterPro" id="IPR036909">
    <property type="entry name" value="Cyt_c-like_dom_sf"/>
</dbReference>
<dbReference type="InterPro" id="IPR050597">
    <property type="entry name" value="Cytochrome_c_Oxidase_Subunit"/>
</dbReference>
<dbReference type="PANTHER" id="PTHR33751">
    <property type="entry name" value="CBB3-TYPE CYTOCHROME C OXIDASE SUBUNIT FIXP"/>
    <property type="match status" value="1"/>
</dbReference>
<dbReference type="PANTHER" id="PTHR33751:SF13">
    <property type="entry name" value="CYTOCHROME BC1 COMPLEX CYTOCHROME C SUBUNIT"/>
    <property type="match status" value="1"/>
</dbReference>
<dbReference type="Pfam" id="PF00034">
    <property type="entry name" value="Cytochrom_C"/>
    <property type="match status" value="1"/>
</dbReference>
<dbReference type="Pfam" id="PF13442">
    <property type="entry name" value="Cytochrome_CBB3"/>
    <property type="match status" value="1"/>
</dbReference>
<dbReference type="PIRSF" id="PIRSF000007">
    <property type="entry name" value="Ubiq_cycred_cyc"/>
    <property type="match status" value="1"/>
</dbReference>
<dbReference type="SUPFAM" id="SSF46626">
    <property type="entry name" value="Cytochrome c"/>
    <property type="match status" value="2"/>
</dbReference>
<dbReference type="PROSITE" id="PS51007">
    <property type="entry name" value="CYTC"/>
    <property type="match status" value="2"/>
</dbReference>
<keyword id="KW-1003">Cell membrane</keyword>
<keyword id="KW-0249">Electron transport</keyword>
<keyword id="KW-0349">Heme</keyword>
<keyword id="KW-0408">Iron</keyword>
<keyword id="KW-0472">Membrane</keyword>
<keyword id="KW-0479">Metal-binding</keyword>
<keyword id="KW-1185">Reference proteome</keyword>
<keyword id="KW-0677">Repeat</keyword>
<keyword id="KW-0679">Respiratory chain</keyword>
<keyword id="KW-1278">Translocase</keyword>
<keyword id="KW-0812">Transmembrane</keyword>
<keyword id="KW-1133">Transmembrane helix</keyword>
<keyword id="KW-0813">Transport</keyword>